<name>TSAD_PSYA2</name>
<sequence length="349" mass="37061">MKVLGLETSCDETGLAIFDSEQINSENKGLLGQVLYSQIELHALYGGVVPELASRDHIRKLVPLFNELLAQCNISKDEIDAIAYTKGPGLIGALMTGALFGRSLAYGLDIPAIGIHHMEGHLLAPLMGLNPPAFPFVSLLVSGGHTLLIAAHGIGQYEILGESIDDAAGECFDKAAKMLGLPYPGGPNIAKLAENGNPNAYSLPRPMLHRGLDFSFSGMKTAVHNLIKDTDGSGNGSDSDPQVRADIAASFQHAVVDTLVKKCVKALKQVDMSRLVIAGGVSANSHLRETLERELAKINATVHYAPPALCTDNGAMIAYAGYERLQAGQSDDLAVSCVPRWPMTELPAV</sequence>
<gene>
    <name evidence="1" type="primary">tsaD</name>
    <name type="synonym">gcp</name>
    <name type="ordered locus">Psyc_0214</name>
</gene>
<reference key="1">
    <citation type="journal article" date="2010" name="Appl. Environ. Microbiol.">
        <title>The genome sequence of Psychrobacter arcticus 273-4, a psychroactive Siberian permafrost bacterium, reveals mechanisms for adaptation to low-temperature growth.</title>
        <authorList>
            <person name="Ayala-del-Rio H.L."/>
            <person name="Chain P.S."/>
            <person name="Grzymski J.J."/>
            <person name="Ponder M.A."/>
            <person name="Ivanova N."/>
            <person name="Bergholz P.W."/>
            <person name="Di Bartolo G."/>
            <person name="Hauser L."/>
            <person name="Land M."/>
            <person name="Bakermans C."/>
            <person name="Rodrigues D."/>
            <person name="Klappenbach J."/>
            <person name="Zarka D."/>
            <person name="Larimer F."/>
            <person name="Richardson P."/>
            <person name="Murray A."/>
            <person name="Thomashow M."/>
            <person name="Tiedje J.M."/>
        </authorList>
    </citation>
    <scope>NUCLEOTIDE SEQUENCE [LARGE SCALE GENOMIC DNA]</scope>
    <source>
        <strain>DSM 17307 / VKM B-2377 / 273-4</strain>
    </source>
</reference>
<evidence type="ECO:0000255" key="1">
    <source>
        <dbReference type="HAMAP-Rule" id="MF_01445"/>
    </source>
</evidence>
<organism>
    <name type="scientific">Psychrobacter arcticus (strain DSM 17307 / VKM B-2377 / 273-4)</name>
    <dbReference type="NCBI Taxonomy" id="259536"/>
    <lineage>
        <taxon>Bacteria</taxon>
        <taxon>Pseudomonadati</taxon>
        <taxon>Pseudomonadota</taxon>
        <taxon>Gammaproteobacteria</taxon>
        <taxon>Moraxellales</taxon>
        <taxon>Moraxellaceae</taxon>
        <taxon>Psychrobacter</taxon>
    </lineage>
</organism>
<accession>Q4FV71</accession>
<dbReference type="EC" id="2.3.1.234" evidence="1"/>
<dbReference type="EMBL" id="CP000082">
    <property type="protein sequence ID" value="AAZ18087.1"/>
    <property type="molecule type" value="Genomic_DNA"/>
</dbReference>
<dbReference type="RefSeq" id="WP_011279525.1">
    <property type="nucleotide sequence ID" value="NC_007204.1"/>
</dbReference>
<dbReference type="SMR" id="Q4FV71"/>
<dbReference type="STRING" id="259536.Psyc_0214"/>
<dbReference type="KEGG" id="par:Psyc_0214"/>
<dbReference type="eggNOG" id="COG0533">
    <property type="taxonomic scope" value="Bacteria"/>
</dbReference>
<dbReference type="HOGENOM" id="CLU_023208_0_2_6"/>
<dbReference type="OrthoDB" id="9806197at2"/>
<dbReference type="Proteomes" id="UP000000546">
    <property type="component" value="Chromosome"/>
</dbReference>
<dbReference type="GO" id="GO:0005737">
    <property type="term" value="C:cytoplasm"/>
    <property type="evidence" value="ECO:0007669"/>
    <property type="project" value="UniProtKB-SubCell"/>
</dbReference>
<dbReference type="GO" id="GO:0005506">
    <property type="term" value="F:iron ion binding"/>
    <property type="evidence" value="ECO:0007669"/>
    <property type="project" value="UniProtKB-UniRule"/>
</dbReference>
<dbReference type="GO" id="GO:0061711">
    <property type="term" value="F:N(6)-L-threonylcarbamoyladenine synthase activity"/>
    <property type="evidence" value="ECO:0007669"/>
    <property type="project" value="UniProtKB-EC"/>
</dbReference>
<dbReference type="GO" id="GO:0002949">
    <property type="term" value="P:tRNA threonylcarbamoyladenosine modification"/>
    <property type="evidence" value="ECO:0007669"/>
    <property type="project" value="UniProtKB-UniRule"/>
</dbReference>
<dbReference type="CDD" id="cd24133">
    <property type="entry name" value="ASKHA_NBD_TsaD_bac"/>
    <property type="match status" value="1"/>
</dbReference>
<dbReference type="FunFam" id="3.30.420.40:FF:000040">
    <property type="entry name" value="tRNA N6-adenosine threonylcarbamoyltransferase"/>
    <property type="match status" value="1"/>
</dbReference>
<dbReference type="Gene3D" id="3.30.420.40">
    <property type="match status" value="2"/>
</dbReference>
<dbReference type="HAMAP" id="MF_01445">
    <property type="entry name" value="TsaD"/>
    <property type="match status" value="1"/>
</dbReference>
<dbReference type="InterPro" id="IPR043129">
    <property type="entry name" value="ATPase_NBD"/>
</dbReference>
<dbReference type="InterPro" id="IPR000905">
    <property type="entry name" value="Gcp-like_dom"/>
</dbReference>
<dbReference type="InterPro" id="IPR017861">
    <property type="entry name" value="KAE1/TsaD"/>
</dbReference>
<dbReference type="InterPro" id="IPR017860">
    <property type="entry name" value="Peptidase_M22_CS"/>
</dbReference>
<dbReference type="InterPro" id="IPR022450">
    <property type="entry name" value="TsaD"/>
</dbReference>
<dbReference type="NCBIfam" id="TIGR00329">
    <property type="entry name" value="gcp_kae1"/>
    <property type="match status" value="1"/>
</dbReference>
<dbReference type="NCBIfam" id="TIGR03723">
    <property type="entry name" value="T6A_TsaD_YgjD"/>
    <property type="match status" value="1"/>
</dbReference>
<dbReference type="PANTHER" id="PTHR11735">
    <property type="entry name" value="TRNA N6-ADENOSINE THREONYLCARBAMOYLTRANSFERASE"/>
    <property type="match status" value="1"/>
</dbReference>
<dbReference type="PANTHER" id="PTHR11735:SF6">
    <property type="entry name" value="TRNA N6-ADENOSINE THREONYLCARBAMOYLTRANSFERASE, MITOCHONDRIAL"/>
    <property type="match status" value="1"/>
</dbReference>
<dbReference type="Pfam" id="PF00814">
    <property type="entry name" value="TsaD"/>
    <property type="match status" value="1"/>
</dbReference>
<dbReference type="PRINTS" id="PR00789">
    <property type="entry name" value="OSIALOPTASE"/>
</dbReference>
<dbReference type="SUPFAM" id="SSF53067">
    <property type="entry name" value="Actin-like ATPase domain"/>
    <property type="match status" value="2"/>
</dbReference>
<dbReference type="PROSITE" id="PS01016">
    <property type="entry name" value="GLYCOPROTEASE"/>
    <property type="match status" value="1"/>
</dbReference>
<protein>
    <recommendedName>
        <fullName evidence="1">tRNA N6-adenosine threonylcarbamoyltransferase</fullName>
        <ecNumber evidence="1">2.3.1.234</ecNumber>
    </recommendedName>
    <alternativeName>
        <fullName evidence="1">N6-L-threonylcarbamoyladenine synthase</fullName>
        <shortName evidence="1">t(6)A synthase</shortName>
    </alternativeName>
    <alternativeName>
        <fullName evidence="1">t(6)A37 threonylcarbamoyladenosine biosynthesis protein TsaD</fullName>
    </alternativeName>
    <alternativeName>
        <fullName evidence="1">tRNA threonylcarbamoyladenosine biosynthesis protein TsaD</fullName>
    </alternativeName>
</protein>
<proteinExistence type="inferred from homology"/>
<comment type="function">
    <text evidence="1">Required for the formation of a threonylcarbamoyl group on adenosine at position 37 (t(6)A37) in tRNAs that read codons beginning with adenine. Is involved in the transfer of the threonylcarbamoyl moiety of threonylcarbamoyl-AMP (TC-AMP) to the N6 group of A37, together with TsaE and TsaB. TsaD likely plays a direct catalytic role in this reaction.</text>
</comment>
<comment type="catalytic activity">
    <reaction evidence="1">
        <text>L-threonylcarbamoyladenylate + adenosine(37) in tRNA = N(6)-L-threonylcarbamoyladenosine(37) in tRNA + AMP + H(+)</text>
        <dbReference type="Rhea" id="RHEA:37059"/>
        <dbReference type="Rhea" id="RHEA-COMP:10162"/>
        <dbReference type="Rhea" id="RHEA-COMP:10163"/>
        <dbReference type="ChEBI" id="CHEBI:15378"/>
        <dbReference type="ChEBI" id="CHEBI:73682"/>
        <dbReference type="ChEBI" id="CHEBI:74411"/>
        <dbReference type="ChEBI" id="CHEBI:74418"/>
        <dbReference type="ChEBI" id="CHEBI:456215"/>
        <dbReference type="EC" id="2.3.1.234"/>
    </reaction>
</comment>
<comment type="cofactor">
    <cofactor evidence="1">
        <name>Fe(2+)</name>
        <dbReference type="ChEBI" id="CHEBI:29033"/>
    </cofactor>
    <text evidence="1">Binds 1 Fe(2+) ion per subunit.</text>
</comment>
<comment type="subcellular location">
    <subcellularLocation>
        <location evidence="1">Cytoplasm</location>
    </subcellularLocation>
</comment>
<comment type="similarity">
    <text evidence="1">Belongs to the KAE1 / TsaD family.</text>
</comment>
<keyword id="KW-0012">Acyltransferase</keyword>
<keyword id="KW-0963">Cytoplasm</keyword>
<keyword id="KW-0408">Iron</keyword>
<keyword id="KW-0479">Metal-binding</keyword>
<keyword id="KW-1185">Reference proteome</keyword>
<keyword id="KW-0808">Transferase</keyword>
<keyword id="KW-0819">tRNA processing</keyword>
<feature type="chain" id="PRO_0000303500" description="tRNA N6-adenosine threonylcarbamoyltransferase">
    <location>
        <begin position="1"/>
        <end position="349"/>
    </location>
</feature>
<feature type="binding site" evidence="1">
    <location>
        <position position="117"/>
    </location>
    <ligand>
        <name>Fe cation</name>
        <dbReference type="ChEBI" id="CHEBI:24875"/>
    </ligand>
</feature>
<feature type="binding site" evidence="1">
    <location>
        <position position="121"/>
    </location>
    <ligand>
        <name>Fe cation</name>
        <dbReference type="ChEBI" id="CHEBI:24875"/>
    </ligand>
</feature>
<feature type="binding site" evidence="1">
    <location>
        <begin position="140"/>
        <end position="144"/>
    </location>
    <ligand>
        <name>substrate</name>
    </ligand>
</feature>
<feature type="binding site" evidence="1">
    <location>
        <position position="173"/>
    </location>
    <ligand>
        <name>substrate</name>
    </ligand>
</feature>
<feature type="binding site" evidence="1">
    <location>
        <position position="186"/>
    </location>
    <ligand>
        <name>substrate</name>
    </ligand>
</feature>
<feature type="binding site" evidence="1">
    <location>
        <position position="284"/>
    </location>
    <ligand>
        <name>substrate</name>
    </ligand>
</feature>
<feature type="binding site" evidence="1">
    <location>
        <position position="312"/>
    </location>
    <ligand>
        <name>Fe cation</name>
        <dbReference type="ChEBI" id="CHEBI:24875"/>
    </ligand>
</feature>